<comment type="function">
    <text evidence="1">One of two assembly initiator proteins, it binds directly to the 5'-end of the 23S rRNA, where it nucleates assembly of the 50S subunit.</text>
</comment>
<comment type="function">
    <text evidence="1">One of the proteins that surrounds the polypeptide exit tunnel on the outside of the subunit.</text>
</comment>
<comment type="subunit">
    <text evidence="1">Part of the 50S ribosomal subunit.</text>
</comment>
<comment type="similarity">
    <text evidence="1">Belongs to the universal ribosomal protein uL24 family.</text>
</comment>
<organism>
    <name type="scientific">Bacillus cereus (strain B4264)</name>
    <dbReference type="NCBI Taxonomy" id="405532"/>
    <lineage>
        <taxon>Bacteria</taxon>
        <taxon>Bacillati</taxon>
        <taxon>Bacillota</taxon>
        <taxon>Bacilli</taxon>
        <taxon>Bacillales</taxon>
        <taxon>Bacillaceae</taxon>
        <taxon>Bacillus</taxon>
        <taxon>Bacillus cereus group</taxon>
    </lineage>
</organism>
<name>RL24_BACC4</name>
<sequence length="103" mass="11228">MHVKKGDKVQVITGKDKGKQGVILVAFPKQNRVIVEGVNIVKKHSKPSQLNPQGGIITKEAPIHVSNVMILDPKTGEPTRVGFKVEDGKKVRIAKKSGELLDK</sequence>
<gene>
    <name evidence="1" type="primary">rplX</name>
    <name type="ordered locus">BCB4264_A0142</name>
</gene>
<proteinExistence type="inferred from homology"/>
<reference key="1">
    <citation type="submission" date="2008-10" db="EMBL/GenBank/DDBJ databases">
        <title>Genome sequence of Bacillus cereus B4264.</title>
        <authorList>
            <person name="Dodson R.J."/>
            <person name="Durkin A.S."/>
            <person name="Rosovitz M.J."/>
            <person name="Rasko D.A."/>
            <person name="Hoffmaster A."/>
            <person name="Ravel J."/>
            <person name="Sutton G."/>
        </authorList>
    </citation>
    <scope>NUCLEOTIDE SEQUENCE [LARGE SCALE GENOMIC DNA]</scope>
    <source>
        <strain>B4264</strain>
    </source>
</reference>
<keyword id="KW-0687">Ribonucleoprotein</keyword>
<keyword id="KW-0689">Ribosomal protein</keyword>
<keyword id="KW-0694">RNA-binding</keyword>
<keyword id="KW-0699">rRNA-binding</keyword>
<evidence type="ECO:0000255" key="1">
    <source>
        <dbReference type="HAMAP-Rule" id="MF_01326"/>
    </source>
</evidence>
<evidence type="ECO:0000305" key="2"/>
<feature type="chain" id="PRO_1000141962" description="Large ribosomal subunit protein uL24">
    <location>
        <begin position="1"/>
        <end position="103"/>
    </location>
</feature>
<protein>
    <recommendedName>
        <fullName evidence="1">Large ribosomal subunit protein uL24</fullName>
    </recommendedName>
    <alternativeName>
        <fullName evidence="2">50S ribosomal protein L24</fullName>
    </alternativeName>
</protein>
<dbReference type="EMBL" id="CP001176">
    <property type="protein sequence ID" value="ACK60955.1"/>
    <property type="molecule type" value="Genomic_DNA"/>
</dbReference>
<dbReference type="RefSeq" id="WP_000558200.1">
    <property type="nucleotide sequence ID" value="NZ_VEHB01000017.1"/>
</dbReference>
<dbReference type="SMR" id="B7HJ59"/>
<dbReference type="GeneID" id="93010932"/>
<dbReference type="KEGG" id="bcb:BCB4264_A0142"/>
<dbReference type="HOGENOM" id="CLU_093315_2_0_9"/>
<dbReference type="Proteomes" id="UP000007096">
    <property type="component" value="Chromosome"/>
</dbReference>
<dbReference type="GO" id="GO:1990904">
    <property type="term" value="C:ribonucleoprotein complex"/>
    <property type="evidence" value="ECO:0007669"/>
    <property type="project" value="UniProtKB-KW"/>
</dbReference>
<dbReference type="GO" id="GO:0005840">
    <property type="term" value="C:ribosome"/>
    <property type="evidence" value="ECO:0007669"/>
    <property type="project" value="UniProtKB-KW"/>
</dbReference>
<dbReference type="GO" id="GO:0019843">
    <property type="term" value="F:rRNA binding"/>
    <property type="evidence" value="ECO:0007669"/>
    <property type="project" value="UniProtKB-UniRule"/>
</dbReference>
<dbReference type="GO" id="GO:0003735">
    <property type="term" value="F:structural constituent of ribosome"/>
    <property type="evidence" value="ECO:0007669"/>
    <property type="project" value="InterPro"/>
</dbReference>
<dbReference type="GO" id="GO:0006412">
    <property type="term" value="P:translation"/>
    <property type="evidence" value="ECO:0007669"/>
    <property type="project" value="UniProtKB-UniRule"/>
</dbReference>
<dbReference type="CDD" id="cd06089">
    <property type="entry name" value="KOW_RPL26"/>
    <property type="match status" value="1"/>
</dbReference>
<dbReference type="FunFam" id="2.30.30.30:FF:000004">
    <property type="entry name" value="50S ribosomal protein L24"/>
    <property type="match status" value="1"/>
</dbReference>
<dbReference type="Gene3D" id="2.30.30.30">
    <property type="match status" value="1"/>
</dbReference>
<dbReference type="HAMAP" id="MF_01326_B">
    <property type="entry name" value="Ribosomal_uL24_B"/>
    <property type="match status" value="1"/>
</dbReference>
<dbReference type="InterPro" id="IPR005824">
    <property type="entry name" value="KOW"/>
</dbReference>
<dbReference type="InterPro" id="IPR014722">
    <property type="entry name" value="Rib_uL2_dom2"/>
</dbReference>
<dbReference type="InterPro" id="IPR003256">
    <property type="entry name" value="Ribosomal_uL24"/>
</dbReference>
<dbReference type="InterPro" id="IPR005825">
    <property type="entry name" value="Ribosomal_uL24_CS"/>
</dbReference>
<dbReference type="InterPro" id="IPR041988">
    <property type="entry name" value="Ribosomal_uL24_KOW"/>
</dbReference>
<dbReference type="InterPro" id="IPR008991">
    <property type="entry name" value="Translation_prot_SH3-like_sf"/>
</dbReference>
<dbReference type="NCBIfam" id="TIGR01079">
    <property type="entry name" value="rplX_bact"/>
    <property type="match status" value="1"/>
</dbReference>
<dbReference type="PANTHER" id="PTHR12903">
    <property type="entry name" value="MITOCHONDRIAL RIBOSOMAL PROTEIN L24"/>
    <property type="match status" value="1"/>
</dbReference>
<dbReference type="Pfam" id="PF00467">
    <property type="entry name" value="KOW"/>
    <property type="match status" value="1"/>
</dbReference>
<dbReference type="Pfam" id="PF17136">
    <property type="entry name" value="ribosomal_L24"/>
    <property type="match status" value="1"/>
</dbReference>
<dbReference type="SMART" id="SM00739">
    <property type="entry name" value="KOW"/>
    <property type="match status" value="1"/>
</dbReference>
<dbReference type="SUPFAM" id="SSF50104">
    <property type="entry name" value="Translation proteins SH3-like domain"/>
    <property type="match status" value="1"/>
</dbReference>
<dbReference type="PROSITE" id="PS01108">
    <property type="entry name" value="RIBOSOMAL_L24"/>
    <property type="match status" value="1"/>
</dbReference>
<accession>B7HJ59</accession>